<sequence length="274" mass="30411">MSASGEISTPRDYIGHHLNHLQLDLRTFELVNPHSTGPATFWTLNIDSLFFSVVLGLAFLLVFRKVAASATSGVPGKLQTAVELIIGFVDNSVRDMYHGKSKVIAPLALTVFVWVLLMNMMDLLPIDLLPYIGEHVFGLPALRVVPTADVSITLSMALGVFILIIFYSIKMKGVGGFTKELTMQPFNHPIFIPVNLILEGVSLLSKPLSLGLRLFGNMYAGELIFILIAGLLPWWSQWMLSVPWAIFHILIITLQAFIFMVLTIVYLSMASEEH</sequence>
<reference key="1">
    <citation type="submission" date="2007-02" db="EMBL/GenBank/DDBJ databases">
        <title>Complete sequence of chromosome of Yersinia pestis Pestoides F.</title>
        <authorList>
            <consortium name="US DOE Joint Genome Institute"/>
            <person name="Copeland A."/>
            <person name="Lucas S."/>
            <person name="Lapidus A."/>
            <person name="Barry K."/>
            <person name="Detter J.C."/>
            <person name="Glavina del Rio T."/>
            <person name="Hammon N."/>
            <person name="Israni S."/>
            <person name="Dalin E."/>
            <person name="Tice H."/>
            <person name="Pitluck S."/>
            <person name="Di Bartolo G."/>
            <person name="Chain P."/>
            <person name="Malfatti S."/>
            <person name="Shin M."/>
            <person name="Vergez L."/>
            <person name="Schmutz J."/>
            <person name="Larimer F."/>
            <person name="Land M."/>
            <person name="Hauser L."/>
            <person name="Worsham P."/>
            <person name="Chu M."/>
            <person name="Bearden S."/>
            <person name="Garcia E."/>
            <person name="Richardson P."/>
        </authorList>
    </citation>
    <scope>NUCLEOTIDE SEQUENCE [LARGE SCALE GENOMIC DNA]</scope>
    <source>
        <strain>Pestoides F</strain>
    </source>
</reference>
<proteinExistence type="inferred from homology"/>
<comment type="function">
    <text evidence="1">Key component of the proton channel; it plays a direct role in the translocation of protons across the membrane.</text>
</comment>
<comment type="subunit">
    <text evidence="1">F-type ATPases have 2 components, CF(1) - the catalytic core - and CF(0) - the membrane proton channel. CF(1) has five subunits: alpha(3), beta(3), gamma(1), delta(1), epsilon(1). CF(0) has three main subunits: a(1), b(2) and c(9-12). The alpha and beta chains form an alternating ring which encloses part of the gamma chain. CF(1) is attached to CF(0) by a central stalk formed by the gamma and epsilon chains, while a peripheral stalk is formed by the delta and b chains.</text>
</comment>
<comment type="subcellular location">
    <subcellularLocation>
        <location evidence="1">Cell inner membrane</location>
        <topology evidence="1">Multi-pass membrane protein</topology>
    </subcellularLocation>
</comment>
<comment type="similarity">
    <text evidence="1">Belongs to the ATPase A chain family.</text>
</comment>
<feature type="chain" id="PRO_0000362514" description="ATP synthase subunit a">
    <location>
        <begin position="1"/>
        <end position="274"/>
    </location>
</feature>
<feature type="transmembrane region" description="Helical" evidence="1">
    <location>
        <begin position="43"/>
        <end position="63"/>
    </location>
</feature>
<feature type="transmembrane region" description="Helical" evidence="1">
    <location>
        <begin position="103"/>
        <end position="123"/>
    </location>
</feature>
<feature type="transmembrane region" description="Helical" evidence="1">
    <location>
        <begin position="149"/>
        <end position="169"/>
    </location>
</feature>
<feature type="transmembrane region" description="Helical" evidence="1">
    <location>
        <begin position="223"/>
        <end position="243"/>
    </location>
</feature>
<feature type="transmembrane region" description="Helical" evidence="1">
    <location>
        <begin position="245"/>
        <end position="265"/>
    </location>
</feature>
<evidence type="ECO:0000255" key="1">
    <source>
        <dbReference type="HAMAP-Rule" id="MF_01393"/>
    </source>
</evidence>
<name>ATP6_YERPP</name>
<dbReference type="EMBL" id="CP000668">
    <property type="protein sequence ID" value="ABP42249.1"/>
    <property type="molecule type" value="Genomic_DNA"/>
</dbReference>
<dbReference type="RefSeq" id="WP_002228150.1">
    <property type="nucleotide sequence ID" value="NZ_CP009715.1"/>
</dbReference>
<dbReference type="SMR" id="A4TSI7"/>
<dbReference type="GeneID" id="96663465"/>
<dbReference type="KEGG" id="ypp:YPDSF_3908"/>
<dbReference type="PATRIC" id="fig|386656.14.peg.609"/>
<dbReference type="GO" id="GO:0005886">
    <property type="term" value="C:plasma membrane"/>
    <property type="evidence" value="ECO:0007669"/>
    <property type="project" value="UniProtKB-SubCell"/>
</dbReference>
<dbReference type="GO" id="GO:0045259">
    <property type="term" value="C:proton-transporting ATP synthase complex"/>
    <property type="evidence" value="ECO:0007669"/>
    <property type="project" value="UniProtKB-KW"/>
</dbReference>
<dbReference type="GO" id="GO:0046933">
    <property type="term" value="F:proton-transporting ATP synthase activity, rotational mechanism"/>
    <property type="evidence" value="ECO:0007669"/>
    <property type="project" value="UniProtKB-UniRule"/>
</dbReference>
<dbReference type="GO" id="GO:0042777">
    <property type="term" value="P:proton motive force-driven plasma membrane ATP synthesis"/>
    <property type="evidence" value="ECO:0007669"/>
    <property type="project" value="TreeGrafter"/>
</dbReference>
<dbReference type="CDD" id="cd00310">
    <property type="entry name" value="ATP-synt_Fo_a_6"/>
    <property type="match status" value="1"/>
</dbReference>
<dbReference type="FunFam" id="1.20.120.220:FF:000002">
    <property type="entry name" value="ATP synthase subunit a"/>
    <property type="match status" value="1"/>
</dbReference>
<dbReference type="Gene3D" id="1.20.120.220">
    <property type="entry name" value="ATP synthase, F0 complex, subunit A"/>
    <property type="match status" value="1"/>
</dbReference>
<dbReference type="HAMAP" id="MF_01393">
    <property type="entry name" value="ATP_synth_a_bact"/>
    <property type="match status" value="1"/>
</dbReference>
<dbReference type="InterPro" id="IPR045082">
    <property type="entry name" value="ATP_syn_F0_a_bact/chloroplast"/>
</dbReference>
<dbReference type="InterPro" id="IPR000568">
    <property type="entry name" value="ATP_synth_F0_asu"/>
</dbReference>
<dbReference type="InterPro" id="IPR023011">
    <property type="entry name" value="ATP_synth_F0_asu_AS"/>
</dbReference>
<dbReference type="InterPro" id="IPR035908">
    <property type="entry name" value="F0_ATP_A_sf"/>
</dbReference>
<dbReference type="NCBIfam" id="TIGR01131">
    <property type="entry name" value="ATP_synt_6_or_A"/>
    <property type="match status" value="1"/>
</dbReference>
<dbReference type="NCBIfam" id="NF004477">
    <property type="entry name" value="PRK05815.1-1"/>
    <property type="match status" value="1"/>
</dbReference>
<dbReference type="PANTHER" id="PTHR42823">
    <property type="entry name" value="ATP SYNTHASE SUBUNIT A, CHLOROPLASTIC"/>
    <property type="match status" value="1"/>
</dbReference>
<dbReference type="PANTHER" id="PTHR42823:SF3">
    <property type="entry name" value="ATP SYNTHASE SUBUNIT A, CHLOROPLASTIC"/>
    <property type="match status" value="1"/>
</dbReference>
<dbReference type="Pfam" id="PF00119">
    <property type="entry name" value="ATP-synt_A"/>
    <property type="match status" value="1"/>
</dbReference>
<dbReference type="PRINTS" id="PR00123">
    <property type="entry name" value="ATPASEA"/>
</dbReference>
<dbReference type="SUPFAM" id="SSF81336">
    <property type="entry name" value="F1F0 ATP synthase subunit A"/>
    <property type="match status" value="1"/>
</dbReference>
<dbReference type="PROSITE" id="PS00449">
    <property type="entry name" value="ATPASE_A"/>
    <property type="match status" value="1"/>
</dbReference>
<gene>
    <name evidence="1" type="primary">atpB</name>
    <name type="ordered locus">YPDSF_3908</name>
</gene>
<keyword id="KW-0066">ATP synthesis</keyword>
<keyword id="KW-0997">Cell inner membrane</keyword>
<keyword id="KW-1003">Cell membrane</keyword>
<keyword id="KW-0138">CF(0)</keyword>
<keyword id="KW-0375">Hydrogen ion transport</keyword>
<keyword id="KW-0406">Ion transport</keyword>
<keyword id="KW-0472">Membrane</keyword>
<keyword id="KW-0812">Transmembrane</keyword>
<keyword id="KW-1133">Transmembrane helix</keyword>
<keyword id="KW-0813">Transport</keyword>
<accession>A4TSI7</accession>
<protein>
    <recommendedName>
        <fullName evidence="1">ATP synthase subunit a</fullName>
    </recommendedName>
    <alternativeName>
        <fullName evidence="1">ATP synthase F0 sector subunit a</fullName>
    </alternativeName>
    <alternativeName>
        <fullName evidence="1">F-ATPase subunit 6</fullName>
    </alternativeName>
</protein>
<organism>
    <name type="scientific">Yersinia pestis (strain Pestoides F)</name>
    <dbReference type="NCBI Taxonomy" id="386656"/>
    <lineage>
        <taxon>Bacteria</taxon>
        <taxon>Pseudomonadati</taxon>
        <taxon>Pseudomonadota</taxon>
        <taxon>Gammaproteobacteria</taxon>
        <taxon>Enterobacterales</taxon>
        <taxon>Yersiniaceae</taxon>
        <taxon>Yersinia</taxon>
    </lineage>
</organism>